<keyword id="KW-0025">Alternative splicing</keyword>
<keyword id="KW-0106">Calcium</keyword>
<keyword id="KW-1003">Cell membrane</keyword>
<keyword id="KW-0967">Endosome</keyword>
<keyword id="KW-0472">Membrane</keyword>
<keyword id="KW-0479">Metal-binding</keyword>
<keyword id="KW-0597">Phosphoprotein</keyword>
<keyword id="KW-1185">Reference proteome</keyword>
<keyword id="KW-0677">Repeat</keyword>
<keyword id="KW-0926">Vacuole</keyword>
<organism>
    <name type="scientific">Arabidopsis thaliana</name>
    <name type="common">Mouse-ear cress</name>
    <dbReference type="NCBI Taxonomy" id="3702"/>
    <lineage>
        <taxon>Eukaryota</taxon>
        <taxon>Viridiplantae</taxon>
        <taxon>Streptophyta</taxon>
        <taxon>Embryophyta</taxon>
        <taxon>Tracheophyta</taxon>
        <taxon>Spermatophyta</taxon>
        <taxon>Magnoliopsida</taxon>
        <taxon>eudicotyledons</taxon>
        <taxon>Gunneridae</taxon>
        <taxon>Pentapetalae</taxon>
        <taxon>rosids</taxon>
        <taxon>malvids</taxon>
        <taxon>Brassicales</taxon>
        <taxon>Brassicaceae</taxon>
        <taxon>Camelineae</taxon>
        <taxon>Arabidopsis</taxon>
    </lineage>
</organism>
<feature type="chain" id="PRO_0000073511" description="Calcineurin B-like protein 10">
    <location>
        <begin position="1"/>
        <end position="256"/>
    </location>
</feature>
<feature type="domain" description="EF-hand 1" evidence="12">
    <location>
        <begin position="77"/>
        <end position="112"/>
    </location>
</feature>
<feature type="domain" description="EF-hand 2" evidence="2">
    <location>
        <begin position="113"/>
        <end position="148"/>
    </location>
</feature>
<feature type="domain" description="EF-hand 3" evidence="2">
    <location>
        <begin position="150"/>
        <end position="185"/>
    </location>
</feature>
<feature type="domain" description="EF-hand 4" evidence="2">
    <location>
        <begin position="194"/>
        <end position="229"/>
    </location>
</feature>
<feature type="binding site" evidence="2">
    <location>
        <position position="207"/>
    </location>
    <ligand>
        <name>Ca(2+)</name>
        <dbReference type="ChEBI" id="CHEBI:29108"/>
    </ligand>
</feature>
<feature type="binding site" evidence="2">
    <location>
        <position position="209"/>
    </location>
    <ligand>
        <name>Ca(2+)</name>
        <dbReference type="ChEBI" id="CHEBI:29108"/>
    </ligand>
</feature>
<feature type="binding site" evidence="2">
    <location>
        <position position="211"/>
    </location>
    <ligand>
        <name>Ca(2+)</name>
        <dbReference type="ChEBI" id="CHEBI:29108"/>
    </ligand>
</feature>
<feature type="binding site" evidence="2">
    <location>
        <position position="213"/>
    </location>
    <ligand>
        <name>Ca(2+)</name>
        <dbReference type="ChEBI" id="CHEBI:29108"/>
    </ligand>
</feature>
<feature type="binding site" evidence="2">
    <location>
        <position position="218"/>
    </location>
    <ligand>
        <name>Ca(2+)</name>
        <dbReference type="ChEBI" id="CHEBI:29108"/>
    </ligand>
</feature>
<feature type="site" description="Involved in dimerization" evidence="1">
    <location>
        <position position="186"/>
    </location>
</feature>
<feature type="modified residue" description="Phosphoserine; by CIPK24" evidence="5 7">
    <location>
        <position position="247"/>
    </location>
</feature>
<feature type="splice variant" id="VSP_012329" description="In isoform 2." evidence="9 10 11">
    <original>MTTGRPNNILALKIST</original>
    <variation>MEQVSS</variation>
    <location>
        <begin position="1"/>
        <end position="16"/>
    </location>
</feature>
<feature type="mutagenesis site" description="Loss of phosphorylation. Loss of phosphorylation; when associated with A-252." evidence="5 7">
    <original>S</original>
    <variation>A</variation>
    <location>
        <position position="247"/>
    </location>
</feature>
<feature type="mutagenesis site" description="No effect on phosphorylation. Loss of phosphorylation; when associated with A-247." evidence="5">
    <original>T</original>
    <variation>A</variation>
    <location>
        <position position="252"/>
    </location>
</feature>
<accession>Q7FRS8</accession>
<accession>O82641</accession>
<accession>Q2HIW7</accession>
<accession>Q8GYR3</accession>
<accession>Q8GZD7</accession>
<gene>
    <name type="primary">CBL10</name>
    <name type="ordered locus">At4g33000</name>
    <name type="ORF">F26P21_120</name>
</gene>
<dbReference type="EMBL" id="AF490607">
    <property type="protein sequence ID" value="AAO72364.1"/>
    <property type="molecule type" value="mRNA"/>
</dbReference>
<dbReference type="EMBL" id="AF513507">
    <property type="protein sequence ID" value="AAO14864.2"/>
    <property type="molecule type" value="mRNA"/>
</dbReference>
<dbReference type="EMBL" id="AL031804">
    <property type="protein sequence ID" value="CAA21209.1"/>
    <property type="status" value="ALT_SEQ"/>
    <property type="molecule type" value="Genomic_DNA"/>
</dbReference>
<dbReference type="EMBL" id="AL161582">
    <property type="protein sequence ID" value="CAB80017.1"/>
    <property type="status" value="ALT_SEQ"/>
    <property type="molecule type" value="Genomic_DNA"/>
</dbReference>
<dbReference type="EMBL" id="CP002687">
    <property type="protein sequence ID" value="AEE86156.1"/>
    <property type="molecule type" value="Genomic_DNA"/>
</dbReference>
<dbReference type="EMBL" id="CP002687">
    <property type="protein sequence ID" value="AEE86157.1"/>
    <property type="molecule type" value="Genomic_DNA"/>
</dbReference>
<dbReference type="EMBL" id="AK117439">
    <property type="protein sequence ID" value="BAC42104.1"/>
    <property type="molecule type" value="mRNA"/>
</dbReference>
<dbReference type="EMBL" id="BT024464">
    <property type="protein sequence ID" value="ABD19645.1"/>
    <property type="molecule type" value="mRNA"/>
</dbReference>
<dbReference type="PIR" id="H85387">
    <property type="entry name" value="H85387"/>
</dbReference>
<dbReference type="PIR" id="T05308">
    <property type="entry name" value="T05308"/>
</dbReference>
<dbReference type="RefSeq" id="NP_195026.1">
    <molecule id="Q7FRS8-1"/>
    <property type="nucleotide sequence ID" value="NM_119454.2"/>
</dbReference>
<dbReference type="RefSeq" id="NP_849485.1">
    <molecule id="Q7FRS8-2"/>
    <property type="nucleotide sequence ID" value="NM_179154.2"/>
</dbReference>
<dbReference type="SMR" id="Q7FRS8"/>
<dbReference type="BioGRID" id="14722">
    <property type="interactions" value="3"/>
</dbReference>
<dbReference type="FunCoup" id="Q7FRS8">
    <property type="interactions" value="734"/>
</dbReference>
<dbReference type="IntAct" id="Q7FRS8">
    <property type="interactions" value="3"/>
</dbReference>
<dbReference type="STRING" id="3702.Q7FRS8"/>
<dbReference type="iPTMnet" id="Q7FRS8"/>
<dbReference type="PaxDb" id="3702-AT4G33000.1"/>
<dbReference type="ProteomicsDB" id="220536">
    <molecule id="Q7FRS8-1"/>
</dbReference>
<dbReference type="EnsemblPlants" id="AT4G33000.1">
    <molecule id="Q7FRS8-1"/>
    <property type="protein sequence ID" value="AT4G33000.1"/>
    <property type="gene ID" value="AT4G33000"/>
</dbReference>
<dbReference type="EnsemblPlants" id="AT4G33000.2">
    <molecule id="Q7FRS8-2"/>
    <property type="protein sequence ID" value="AT4G33000.2"/>
    <property type="gene ID" value="AT4G33000"/>
</dbReference>
<dbReference type="GeneID" id="829437"/>
<dbReference type="Gramene" id="AT4G33000.1">
    <molecule id="Q7FRS8-1"/>
    <property type="protein sequence ID" value="AT4G33000.1"/>
    <property type="gene ID" value="AT4G33000"/>
</dbReference>
<dbReference type="Gramene" id="AT4G33000.2">
    <molecule id="Q7FRS8-2"/>
    <property type="protein sequence ID" value="AT4G33000.2"/>
    <property type="gene ID" value="AT4G33000"/>
</dbReference>
<dbReference type="KEGG" id="ath:AT4G33000"/>
<dbReference type="Araport" id="AT4G33000"/>
<dbReference type="TAIR" id="AT4G33000">
    <property type="gene designation" value="CBL10"/>
</dbReference>
<dbReference type="eggNOG" id="KOG0034">
    <property type="taxonomic scope" value="Eukaryota"/>
</dbReference>
<dbReference type="InParanoid" id="Q7FRS8"/>
<dbReference type="OMA" id="FMYRVAF"/>
<dbReference type="PhylomeDB" id="Q7FRS8"/>
<dbReference type="PRO" id="PR:Q7FRS8"/>
<dbReference type="Proteomes" id="UP000006548">
    <property type="component" value="Chromosome 4"/>
</dbReference>
<dbReference type="ExpressionAtlas" id="Q7FRS8">
    <property type="expression patterns" value="baseline and differential"/>
</dbReference>
<dbReference type="GO" id="GO:0005737">
    <property type="term" value="C:cytoplasm"/>
    <property type="evidence" value="ECO:0000314"/>
    <property type="project" value="TAIR"/>
</dbReference>
<dbReference type="GO" id="GO:0005768">
    <property type="term" value="C:endosome"/>
    <property type="evidence" value="ECO:0007669"/>
    <property type="project" value="UniProtKB-SubCell"/>
</dbReference>
<dbReference type="GO" id="GO:0009705">
    <property type="term" value="C:plant-type vacuole membrane"/>
    <property type="evidence" value="ECO:0000314"/>
    <property type="project" value="TAIR"/>
</dbReference>
<dbReference type="GO" id="GO:0005886">
    <property type="term" value="C:plasma membrane"/>
    <property type="evidence" value="ECO:0000314"/>
    <property type="project" value="TAIR"/>
</dbReference>
<dbReference type="GO" id="GO:0005509">
    <property type="term" value="F:calcium ion binding"/>
    <property type="evidence" value="ECO:0000314"/>
    <property type="project" value="TAIR"/>
</dbReference>
<dbReference type="GO" id="GO:0019900">
    <property type="term" value="F:kinase binding"/>
    <property type="evidence" value="ECO:0007669"/>
    <property type="project" value="InterPro"/>
</dbReference>
<dbReference type="GO" id="GO:0019722">
    <property type="term" value="P:calcium-mediated signaling"/>
    <property type="evidence" value="ECO:0007669"/>
    <property type="project" value="InterPro"/>
</dbReference>
<dbReference type="GO" id="GO:0042538">
    <property type="term" value="P:hyperosmotic salinity response"/>
    <property type="evidence" value="ECO:0000315"/>
    <property type="project" value="TAIR"/>
</dbReference>
<dbReference type="GO" id="GO:0050801">
    <property type="term" value="P:monoatomic ion homeostasis"/>
    <property type="evidence" value="ECO:0000315"/>
    <property type="project" value="TAIR"/>
</dbReference>
<dbReference type="GO" id="GO:0043266">
    <property type="term" value="P:regulation of potassium ion transport"/>
    <property type="evidence" value="ECO:0000315"/>
    <property type="project" value="TAIR"/>
</dbReference>
<dbReference type="CDD" id="cd00051">
    <property type="entry name" value="EFh"/>
    <property type="match status" value="2"/>
</dbReference>
<dbReference type="FunFam" id="1.10.238.10:FF:000073">
    <property type="entry name" value="calcineurin B-like protein 3"/>
    <property type="match status" value="1"/>
</dbReference>
<dbReference type="Gene3D" id="1.10.238.10">
    <property type="entry name" value="EF-hand"/>
    <property type="match status" value="1"/>
</dbReference>
<dbReference type="InterPro" id="IPR045198">
    <property type="entry name" value="CNBL1-10"/>
</dbReference>
<dbReference type="InterPro" id="IPR011992">
    <property type="entry name" value="EF-hand-dom_pair"/>
</dbReference>
<dbReference type="InterPro" id="IPR018247">
    <property type="entry name" value="EF_Hand_1_Ca_BS"/>
</dbReference>
<dbReference type="InterPro" id="IPR002048">
    <property type="entry name" value="EF_hand_dom"/>
</dbReference>
<dbReference type="PANTHER" id="PTHR23056">
    <property type="entry name" value="CALCINEURIN B"/>
    <property type="match status" value="1"/>
</dbReference>
<dbReference type="PANTHER" id="PTHR23056:SF26">
    <property type="entry name" value="CALCINEURIN B-LIKE PROTEIN 10"/>
    <property type="match status" value="1"/>
</dbReference>
<dbReference type="Pfam" id="PF13202">
    <property type="entry name" value="EF-hand_5"/>
    <property type="match status" value="1"/>
</dbReference>
<dbReference type="Pfam" id="PF13499">
    <property type="entry name" value="EF-hand_7"/>
    <property type="match status" value="1"/>
</dbReference>
<dbReference type="PRINTS" id="PR00450">
    <property type="entry name" value="RECOVERIN"/>
</dbReference>
<dbReference type="SMART" id="SM00054">
    <property type="entry name" value="EFh"/>
    <property type="match status" value="3"/>
</dbReference>
<dbReference type="SUPFAM" id="SSF47473">
    <property type="entry name" value="EF-hand"/>
    <property type="match status" value="1"/>
</dbReference>
<dbReference type="PROSITE" id="PS00018">
    <property type="entry name" value="EF_HAND_1"/>
    <property type="match status" value="1"/>
</dbReference>
<dbReference type="PROSITE" id="PS50222">
    <property type="entry name" value="EF_HAND_2"/>
    <property type="match status" value="3"/>
</dbReference>
<protein>
    <recommendedName>
        <fullName>Calcineurin B-like protein 10</fullName>
    </recommendedName>
    <alternativeName>
        <fullName>SOS3-like calcium binding protein 8</fullName>
        <shortName>SCaBP8</shortName>
    </alternativeName>
</protein>
<evidence type="ECO:0000250" key="1"/>
<evidence type="ECO:0000255" key="2">
    <source>
        <dbReference type="PROSITE-ProRule" id="PRU00448"/>
    </source>
</evidence>
<evidence type="ECO:0000269" key="3">
    <source>
    </source>
</evidence>
<evidence type="ECO:0000269" key="4">
    <source>
    </source>
</evidence>
<evidence type="ECO:0000269" key="5">
    <source>
    </source>
</evidence>
<evidence type="ECO:0000269" key="6">
    <source>
    </source>
</evidence>
<evidence type="ECO:0000269" key="7">
    <source>
    </source>
</evidence>
<evidence type="ECO:0000269" key="8">
    <source>
    </source>
</evidence>
<evidence type="ECO:0000303" key="9">
    <source>
    </source>
</evidence>
<evidence type="ECO:0000303" key="10">
    <source ref="2"/>
</evidence>
<evidence type="ECO:0000303" key="11">
    <source ref="6"/>
</evidence>
<evidence type="ECO:0000305" key="12"/>
<proteinExistence type="evidence at protein level"/>
<sequence>MTTGRPNNILALKISTRSSSLTVGEQFCAVFIPFFAIIDVLVSSVGQCFDCRSTSPRTCQHADLERLARESQFSVNEVEALYELFKKLSCSIIDDGLIHKEELRLALFQAPYGENLFLDRVFDLFDEKKNGVIEFEEFIHALSVFHPYASIQEKTDFAFRLYDLRQTGFIEREEVQQMVSAILLESDMMLSDELLTMIIDKTFADADSDKDGKISKDEWNVYVHKHPSLLKNMTLPYLKDVTTAFPSFIFNTEVED</sequence>
<reference key="1">
    <citation type="journal article" date="2002" name="Plant Cell">
        <title>Calmodulins and calcineurin B-like proteins: calcium sensors for specific signal response coupling in plants.</title>
        <authorList>
            <person name="Luan S."/>
            <person name="Kudla J."/>
            <person name="Rodriguez-Concepcion M."/>
            <person name="Yalovsky S."/>
            <person name="Gruissem W."/>
        </authorList>
    </citation>
    <scope>NUCLEOTIDE SEQUENCE [MRNA] (ISOFORM 1)</scope>
</reference>
<reference key="2">
    <citation type="submission" date="2004-01" db="EMBL/GenBank/DDBJ databases">
        <title>Isolation of calcineurin B-like gene from Arabidopsis.</title>
        <authorList>
            <person name="Cheong Y.H."/>
            <person name="Luan S."/>
        </authorList>
    </citation>
    <scope>NUCLEOTIDE SEQUENCE [MRNA] (ISOFORM 2)</scope>
</reference>
<reference key="3">
    <citation type="journal article" date="1999" name="Nature">
        <title>Sequence and analysis of chromosome 4 of the plant Arabidopsis thaliana.</title>
        <authorList>
            <person name="Mayer K.F.X."/>
            <person name="Schueller C."/>
            <person name="Wambutt R."/>
            <person name="Murphy G."/>
            <person name="Volckaert G."/>
            <person name="Pohl T."/>
            <person name="Duesterhoeft A."/>
            <person name="Stiekema W."/>
            <person name="Entian K.-D."/>
            <person name="Terryn N."/>
            <person name="Harris B."/>
            <person name="Ansorge W."/>
            <person name="Brandt P."/>
            <person name="Grivell L.A."/>
            <person name="Rieger M."/>
            <person name="Weichselgartner M."/>
            <person name="de Simone V."/>
            <person name="Obermaier B."/>
            <person name="Mache R."/>
            <person name="Mueller M."/>
            <person name="Kreis M."/>
            <person name="Delseny M."/>
            <person name="Puigdomenech P."/>
            <person name="Watson M."/>
            <person name="Schmidtheini T."/>
            <person name="Reichert B."/>
            <person name="Portetelle D."/>
            <person name="Perez-Alonso M."/>
            <person name="Boutry M."/>
            <person name="Bancroft I."/>
            <person name="Vos P."/>
            <person name="Hoheisel J."/>
            <person name="Zimmermann W."/>
            <person name="Wedler H."/>
            <person name="Ridley P."/>
            <person name="Langham S.-A."/>
            <person name="McCullagh B."/>
            <person name="Bilham L."/>
            <person name="Robben J."/>
            <person name="van der Schueren J."/>
            <person name="Grymonprez B."/>
            <person name="Chuang Y.-J."/>
            <person name="Vandenbussche F."/>
            <person name="Braeken M."/>
            <person name="Weltjens I."/>
            <person name="Voet M."/>
            <person name="Bastiaens I."/>
            <person name="Aert R."/>
            <person name="Defoor E."/>
            <person name="Weitzenegger T."/>
            <person name="Bothe G."/>
            <person name="Ramsperger U."/>
            <person name="Hilbert H."/>
            <person name="Braun M."/>
            <person name="Holzer E."/>
            <person name="Brandt A."/>
            <person name="Peters S."/>
            <person name="van Staveren M."/>
            <person name="Dirkse W."/>
            <person name="Mooijman P."/>
            <person name="Klein Lankhorst R."/>
            <person name="Rose M."/>
            <person name="Hauf J."/>
            <person name="Koetter P."/>
            <person name="Berneiser S."/>
            <person name="Hempel S."/>
            <person name="Feldpausch M."/>
            <person name="Lamberth S."/>
            <person name="Van den Daele H."/>
            <person name="De Keyser A."/>
            <person name="Buysshaert C."/>
            <person name="Gielen J."/>
            <person name="Villarroel R."/>
            <person name="De Clercq R."/>
            <person name="van Montagu M."/>
            <person name="Rogers J."/>
            <person name="Cronin A."/>
            <person name="Quail M.A."/>
            <person name="Bray-Allen S."/>
            <person name="Clark L."/>
            <person name="Doggett J."/>
            <person name="Hall S."/>
            <person name="Kay M."/>
            <person name="Lennard N."/>
            <person name="McLay K."/>
            <person name="Mayes R."/>
            <person name="Pettett A."/>
            <person name="Rajandream M.A."/>
            <person name="Lyne M."/>
            <person name="Benes V."/>
            <person name="Rechmann S."/>
            <person name="Borkova D."/>
            <person name="Bloecker H."/>
            <person name="Scharfe M."/>
            <person name="Grimm M."/>
            <person name="Loehnert T.-H."/>
            <person name="Dose S."/>
            <person name="de Haan M."/>
            <person name="Maarse A.C."/>
            <person name="Schaefer M."/>
            <person name="Mueller-Auer S."/>
            <person name="Gabel C."/>
            <person name="Fuchs M."/>
            <person name="Fartmann B."/>
            <person name="Granderath K."/>
            <person name="Dauner D."/>
            <person name="Herzl A."/>
            <person name="Neumann S."/>
            <person name="Argiriou A."/>
            <person name="Vitale D."/>
            <person name="Liguori R."/>
            <person name="Piravandi E."/>
            <person name="Massenet O."/>
            <person name="Quigley F."/>
            <person name="Clabauld G."/>
            <person name="Muendlein A."/>
            <person name="Felber R."/>
            <person name="Schnabl S."/>
            <person name="Hiller R."/>
            <person name="Schmidt W."/>
            <person name="Lecharny A."/>
            <person name="Aubourg S."/>
            <person name="Chefdor F."/>
            <person name="Cooke R."/>
            <person name="Berger C."/>
            <person name="Monfort A."/>
            <person name="Casacuberta E."/>
            <person name="Gibbons T."/>
            <person name="Weber N."/>
            <person name="Vandenbol M."/>
            <person name="Bargues M."/>
            <person name="Terol J."/>
            <person name="Torres A."/>
            <person name="Perez-Perez A."/>
            <person name="Purnelle B."/>
            <person name="Bent E."/>
            <person name="Johnson S."/>
            <person name="Tacon D."/>
            <person name="Jesse T."/>
            <person name="Heijnen L."/>
            <person name="Schwarz S."/>
            <person name="Scholler P."/>
            <person name="Heber S."/>
            <person name="Francs P."/>
            <person name="Bielke C."/>
            <person name="Frishman D."/>
            <person name="Haase D."/>
            <person name="Lemcke K."/>
            <person name="Mewes H.-W."/>
            <person name="Stocker S."/>
            <person name="Zaccaria P."/>
            <person name="Bevan M."/>
            <person name="Wilson R.K."/>
            <person name="de la Bastide M."/>
            <person name="Habermann K."/>
            <person name="Parnell L."/>
            <person name="Dedhia N."/>
            <person name="Gnoj L."/>
            <person name="Schutz K."/>
            <person name="Huang E."/>
            <person name="Spiegel L."/>
            <person name="Sekhon M."/>
            <person name="Murray J."/>
            <person name="Sheet P."/>
            <person name="Cordes M."/>
            <person name="Abu-Threideh J."/>
            <person name="Stoneking T."/>
            <person name="Kalicki J."/>
            <person name="Graves T."/>
            <person name="Harmon G."/>
            <person name="Edwards J."/>
            <person name="Latreille P."/>
            <person name="Courtney L."/>
            <person name="Cloud J."/>
            <person name="Abbott A."/>
            <person name="Scott K."/>
            <person name="Johnson D."/>
            <person name="Minx P."/>
            <person name="Bentley D."/>
            <person name="Fulton B."/>
            <person name="Miller N."/>
            <person name="Greco T."/>
            <person name="Kemp K."/>
            <person name="Kramer J."/>
            <person name="Fulton L."/>
            <person name="Mardis E."/>
            <person name="Dante M."/>
            <person name="Pepin K."/>
            <person name="Hillier L.W."/>
            <person name="Nelson J."/>
            <person name="Spieth J."/>
            <person name="Ryan E."/>
            <person name="Andrews S."/>
            <person name="Geisel C."/>
            <person name="Layman D."/>
            <person name="Du H."/>
            <person name="Ali J."/>
            <person name="Berghoff A."/>
            <person name="Jones K."/>
            <person name="Drone K."/>
            <person name="Cotton M."/>
            <person name="Joshu C."/>
            <person name="Antonoiu B."/>
            <person name="Zidanic M."/>
            <person name="Strong C."/>
            <person name="Sun H."/>
            <person name="Lamar B."/>
            <person name="Yordan C."/>
            <person name="Ma P."/>
            <person name="Zhong J."/>
            <person name="Preston R."/>
            <person name="Vil D."/>
            <person name="Shekher M."/>
            <person name="Matero A."/>
            <person name="Shah R."/>
            <person name="Swaby I.K."/>
            <person name="O'Shaughnessy A."/>
            <person name="Rodriguez M."/>
            <person name="Hoffman J."/>
            <person name="Till S."/>
            <person name="Granat S."/>
            <person name="Shohdy N."/>
            <person name="Hasegawa A."/>
            <person name="Hameed A."/>
            <person name="Lodhi M."/>
            <person name="Johnson A."/>
            <person name="Chen E."/>
            <person name="Marra M.A."/>
            <person name="Martienssen R."/>
            <person name="McCombie W.R."/>
        </authorList>
    </citation>
    <scope>NUCLEOTIDE SEQUENCE [LARGE SCALE GENOMIC DNA]</scope>
    <source>
        <strain>cv. Columbia</strain>
    </source>
</reference>
<reference key="4">
    <citation type="journal article" date="2017" name="Plant J.">
        <title>Araport11: a complete reannotation of the Arabidopsis thaliana reference genome.</title>
        <authorList>
            <person name="Cheng C.Y."/>
            <person name="Krishnakumar V."/>
            <person name="Chan A.P."/>
            <person name="Thibaud-Nissen F."/>
            <person name="Schobel S."/>
            <person name="Town C.D."/>
        </authorList>
    </citation>
    <scope>GENOME REANNOTATION</scope>
    <source>
        <strain>cv. Columbia</strain>
    </source>
</reference>
<reference key="5">
    <citation type="journal article" date="2002" name="Science">
        <title>Functional annotation of a full-length Arabidopsis cDNA collection.</title>
        <authorList>
            <person name="Seki M."/>
            <person name="Narusaka M."/>
            <person name="Kamiya A."/>
            <person name="Ishida J."/>
            <person name="Satou M."/>
            <person name="Sakurai T."/>
            <person name="Nakajima M."/>
            <person name="Enju A."/>
            <person name="Akiyama K."/>
            <person name="Oono Y."/>
            <person name="Muramatsu M."/>
            <person name="Hayashizaki Y."/>
            <person name="Kawai J."/>
            <person name="Carninci P."/>
            <person name="Itoh M."/>
            <person name="Ishii Y."/>
            <person name="Arakawa T."/>
            <person name="Shibata K."/>
            <person name="Shinagawa A."/>
            <person name="Shinozaki K."/>
        </authorList>
    </citation>
    <scope>NUCLEOTIDE SEQUENCE [LARGE SCALE MRNA] (ISOFORM 2)</scope>
    <source>
        <strain>cv. Columbia</strain>
    </source>
</reference>
<reference key="6">
    <citation type="submission" date="2006-02" db="EMBL/GenBank/DDBJ databases">
        <title>Arabidopsis ORF clones.</title>
        <authorList>
            <person name="Shinn P."/>
            <person name="Chen H."/>
            <person name="Kim C.J."/>
            <person name="Ecker J.R."/>
        </authorList>
    </citation>
    <scope>NUCLEOTIDE SEQUENCE [LARGE SCALE MRNA] (ISOFORM 2)</scope>
    <source>
        <strain>cv. Columbia</strain>
    </source>
</reference>
<reference key="7">
    <citation type="journal article" date="2004" name="Plant Physiol.">
        <title>Calcium sensors and their interacting protein kinases: genomics of the Arabidopsis and rice CBL-CIPK signaling networks.</title>
        <authorList>
            <person name="Kolukisaoglu U."/>
            <person name="Weinl S."/>
            <person name="Blazevic D."/>
            <person name="Batistic O."/>
            <person name="Kudla J."/>
        </authorList>
    </citation>
    <scope>GENE FAMILY</scope>
</reference>
<reference key="8">
    <citation type="journal article" date="2007" name="Plant Cell">
        <title>SCABP8/CBL10, a putative calcium sensor, interacts with the protein kinase SOS2 to protect Arabidopsis shoots from salt stress.</title>
        <authorList>
            <person name="Quan R."/>
            <person name="Lin H."/>
            <person name="Mendoza I."/>
            <person name="Zhang Y."/>
            <person name="Cao W."/>
            <person name="Yang Y."/>
            <person name="Shang M."/>
            <person name="Chen S."/>
            <person name="Pardo J.M."/>
            <person name="Guo Y."/>
        </authorList>
    </citation>
    <scope>FUNCTION</scope>
    <scope>INTERACTION WITH CIPK24</scope>
    <scope>DISRUPTION PHENOTYPE</scope>
    <scope>SUBCELLULAR LOCATION</scope>
</reference>
<reference key="9">
    <citation type="journal article" date="2007" name="Plant J.">
        <title>The calcium sensor CBL10 mediates salt tolerance by regulating ion homeostasis in Arabidopsis.</title>
        <authorList>
            <person name="Kim B.G."/>
            <person name="Waadt R."/>
            <person name="Cheong Y.H."/>
            <person name="Pandey G.K."/>
            <person name="Dominguez-Solis J.R."/>
            <person name="Schueltke S."/>
            <person name="Lee S.C."/>
            <person name="Kudla J."/>
            <person name="Luan S."/>
        </authorList>
    </citation>
    <scope>FUNCTION</scope>
    <scope>TISSUE SPECIFICITY</scope>
    <scope>INDUCTION</scope>
    <scope>INTERACTION WITH CIPK24</scope>
    <scope>SUBCELLULAR LOCATION</scope>
    <scope>DISRUPTION PHENOTYPE</scope>
</reference>
<reference key="10">
    <citation type="journal article" date="2009" name="Plant Cell">
        <title>Phosphorylation of SOS3-LIKE CALCIUM BINDING PROTEIN8 by SOS2 protein kinase stabilizes their protein complex and regulates salt tolerance in Arabidopsis.</title>
        <authorList>
            <person name="Lin H."/>
            <person name="Yang Y."/>
            <person name="Quan R."/>
            <person name="Mendoza I."/>
            <person name="Wu Y."/>
            <person name="Du W."/>
            <person name="Zhao S."/>
            <person name="Schumaker K.S."/>
            <person name="Pardo J.M."/>
            <person name="Guo Y."/>
        </authorList>
    </citation>
    <scope>PHOSPHORYLATION AT SER-247</scope>
    <scope>MUTAGENESIS OF SER-247 AND THR-252</scope>
</reference>
<reference key="11">
    <citation type="journal article" date="2010" name="Plant J.">
        <title>CBL-mediated targeting of CIPKs facilitates the decoding of calcium signals emanating from distinct cellular stores.</title>
        <authorList>
            <person name="Batistic O."/>
            <person name="Waadt R."/>
            <person name="Steinhorst L."/>
            <person name="Held K."/>
            <person name="Kudla J."/>
        </authorList>
    </citation>
    <scope>SUBCELLULAR LOCATION</scope>
    <scope>DOMAIN</scope>
</reference>
<reference key="12">
    <citation type="journal article" date="2012" name="J. Biol. Chem.">
        <title>Phosphorylation of calcineurin B-like (CBL) calcium sensor proteins by their CBL-interacting protein kinases (CIPKs) is required for full activity of CBL-CIPK complexes toward their target proteins.</title>
        <authorList>
            <person name="Hashimoto K."/>
            <person name="Eckert C."/>
            <person name="Anschuetz U."/>
            <person name="Scholz M."/>
            <person name="Held K."/>
            <person name="Waadt R."/>
            <person name="Reyer A."/>
            <person name="Hippler M."/>
            <person name="Becker D."/>
            <person name="Kudla J."/>
        </authorList>
    </citation>
    <scope>PHOSPHORYLATION AT SER-247</scope>
    <scope>INTERACTION WITH CIPK24</scope>
    <scope>MUTAGENESIS OF SER-247</scope>
</reference>
<reference key="13">
    <citation type="journal article" date="2013" name="Plant J.">
        <title>Calcineurin B-like protein CBL10 directly interacts with AKT1 and modulates K+ homeostasis in Arabidopsis.</title>
        <authorList>
            <person name="Ren X.L."/>
            <person name="Qi G.N."/>
            <person name="Feng H.Q."/>
            <person name="Zhao S."/>
            <person name="Zhao S.S."/>
            <person name="Wang Y."/>
            <person name="Wu W.H."/>
        </authorList>
    </citation>
    <scope>FUNCTION</scope>
    <scope>INTERACTION WITH AKT1</scope>
    <scope>DISRUPTION PHENOTYPE</scope>
</reference>
<comment type="function">
    <text evidence="3 4 8">Acts as a calcium sensor. CBL proteins interact with CIPK serine-threonine protein kinases. Binding of a CBL protein to the regulatory NAF domain of a CIPK protein lead to the activation of the kinase in a calcium-dependent manner. Mediates salt tolerance, but only when phosphorylated. Competes with CIPK23 for a direct binding to AKT1, negatively regulating its activity via a protein kinase-independent mechanism.</text>
</comment>
<comment type="subunit">
    <text evidence="1 3 4 7 8">Homodimer (By similarity). Interacts with CIPK24 and AKT1.</text>
</comment>
<comment type="interaction">
    <interactant intactId="EBI-2026616">
        <id>Q7FRS8</id>
    </interactant>
    <interactant intactId="EBI-537551">
        <id>Q9LDI3</id>
        <label>CIPK24</label>
    </interactant>
    <organismsDiffer>false</organismsDiffer>
    <experiments>5</experiments>
</comment>
<comment type="interaction">
    <interactant intactId="EBI-2026677">
        <id>Q7FRS8-2</id>
    </interactant>
    <interactant intactId="EBI-537551">
        <id>Q9LDI3</id>
        <label>CIPK24</label>
    </interactant>
    <organismsDiffer>false</organismsDiffer>
    <experiments>4</experiments>
</comment>
<comment type="subcellular location">
    <subcellularLocation>
        <location>Vacuole membrane</location>
    </subcellularLocation>
    <subcellularLocation>
        <location>Endosome</location>
    </subcellularLocation>
    <subcellularLocation>
        <location>Cell membrane</location>
    </subcellularLocation>
    <text evidence="6">Exclusively targeted to the tonoplast when interacting with CIPK24 (PubMed:19832944). PubMed:17449811 indicates a cell membrane localization while PubMed:17825054 shows a vacuole membrane and endosome localization.</text>
</comment>
<comment type="alternative products">
    <event type="alternative splicing"/>
    <isoform>
        <id>Q7FRS8-1</id>
        <name>1</name>
        <sequence type="displayed"/>
    </isoform>
    <isoform>
        <id>Q7FRS8-2</id>
        <name>2</name>
        <sequence type="described" ref="VSP_012329"/>
    </isoform>
</comment>
<comment type="tissue specificity">
    <text evidence="4">Expressed in shoots, leaves, stems, flowers and siliques. Barely detected in roots.</text>
</comment>
<comment type="induction">
    <text evidence="4">Not induced by abiotic stresses.</text>
</comment>
<comment type="domain">
    <text evidence="6">The N-terminal 40 amino acids are necessary and sufficient for vacuolar and endosomal targeting.</text>
</comment>
<comment type="PTM">
    <text evidence="5 7">Phosphorylated by CIPK24. The level of phosphorylation is enhanced by CIPK24-CBL10 interaction. The phosphorylation is induced by salt stress and limited to membrane-bound CBL10.</text>
</comment>
<comment type="disruption phenotype">
    <text evidence="3 4 8">No visible phenotype when grown under normal conditions but hypersensitivity to salt stress.</text>
</comment>
<comment type="miscellaneous">
    <molecule>Isoform 2</molecule>
    <text evidence="12">May be due to a competing donor splice site.</text>
</comment>
<comment type="similarity">
    <text evidence="12">Belongs to the calcineurin regulatory subunit family.</text>
</comment>
<comment type="sequence caution" evidence="12">
    <conflict type="erroneous gene model prediction">
        <sequence resource="EMBL-CDS" id="CAA21209"/>
    </conflict>
</comment>
<comment type="sequence caution" evidence="12">
    <conflict type="erroneous gene model prediction">
        <sequence resource="EMBL-CDS" id="CAB80017"/>
    </conflict>
</comment>
<name>CNBLA_ARATH</name>